<sequence length="330" mass="36206">MDRVLPFRFAEEEGVFWLLDQRRLPQEEVYVPVRTAREMAQAIRDMVVRGAPAIGVSAAFGMVLAHLAGEDLEEADRRLRASRPTAVNLFHALDRMRPFWGDLAGSLLEARRIWREVEETEAAISRHGAQVLWGQVLTHCNTGPLATGGYGTALGAIVEAYRLGRVRHVWVDETRPYLQGARLTAYELQKAGVPATLITDGMAGWLMARGAVDAVVVGVDRMALNGDFANKVGTYALAVLAHHHGIPFYAALPLSSVDPRLASGEGIPIEERSPEEVVAFRGVRIAPEGFPAYHPAFDVTPHRYLTGIITEKGVLYPPFAEGLRRALGLD</sequence>
<protein>
    <recommendedName>
        <fullName evidence="1">Methylthioribose-1-phosphate isomerase</fullName>
        <shortName evidence="1">M1Pi</shortName>
        <shortName evidence="1">MTR-1-P isomerase</shortName>
        <ecNumber evidence="1">5.3.1.23</ecNumber>
    </recommendedName>
    <alternativeName>
        <fullName evidence="1">S-methyl-5-thioribose-1-phosphate isomerase</fullName>
    </alternativeName>
</protein>
<accession>Q5SJE2</accession>
<comment type="function">
    <text evidence="1">Catalyzes the interconversion of methylthioribose-1-phosphate (MTR-1-P) into methylthioribulose-1-phosphate (MTRu-1-P).</text>
</comment>
<comment type="catalytic activity">
    <reaction evidence="1">
        <text>5-(methylsulfanyl)-alpha-D-ribose 1-phosphate = 5-(methylsulfanyl)-D-ribulose 1-phosphate</text>
        <dbReference type="Rhea" id="RHEA:19989"/>
        <dbReference type="ChEBI" id="CHEBI:58533"/>
        <dbReference type="ChEBI" id="CHEBI:58548"/>
        <dbReference type="EC" id="5.3.1.23"/>
    </reaction>
</comment>
<comment type="pathway">
    <text evidence="1">Amino-acid biosynthesis; L-methionine biosynthesis via salvage pathway; L-methionine from S-methyl-5-thio-alpha-D-ribose 1-phosphate: step 1/6.</text>
</comment>
<comment type="similarity">
    <text evidence="2">Belongs to the eIF-2B alpha/beta/delta subunits family. MtnA subfamily.</text>
</comment>
<reference key="1">
    <citation type="submission" date="2004-11" db="EMBL/GenBank/DDBJ databases">
        <title>Complete genome sequence of Thermus thermophilus HB8.</title>
        <authorList>
            <person name="Masui R."/>
            <person name="Kurokawa K."/>
            <person name="Nakagawa N."/>
            <person name="Tokunaga F."/>
            <person name="Koyama Y."/>
            <person name="Shibata T."/>
            <person name="Oshima T."/>
            <person name="Yokoyama S."/>
            <person name="Yasunaga T."/>
            <person name="Kuramitsu S."/>
        </authorList>
    </citation>
    <scope>NUCLEOTIDE SEQUENCE [LARGE SCALE GENOMIC DNA]</scope>
    <source>
        <strain>ATCC 27634 / DSM 579 / HB8</strain>
    </source>
</reference>
<proteinExistence type="inferred from homology"/>
<keyword id="KW-0028">Amino-acid biosynthesis</keyword>
<keyword id="KW-0413">Isomerase</keyword>
<keyword id="KW-0486">Methionine biosynthesis</keyword>
<keyword id="KW-1185">Reference proteome</keyword>
<gene>
    <name evidence="1" type="primary">mtnA</name>
    <name type="ordered locus">TTHA1072</name>
</gene>
<feature type="chain" id="PRO_0000357265" description="Methylthioribose-1-phosphate isomerase">
    <location>
        <begin position="1"/>
        <end position="330"/>
    </location>
</feature>
<feature type="active site" description="Proton donor" evidence="1">
    <location>
        <position position="220"/>
    </location>
</feature>
<feature type="binding site" evidence="1">
    <location>
        <begin position="49"/>
        <end position="51"/>
    </location>
    <ligand>
        <name>substrate</name>
    </ligand>
</feature>
<feature type="binding site" evidence="1">
    <location>
        <position position="83"/>
    </location>
    <ligand>
        <name>substrate</name>
    </ligand>
</feature>
<feature type="binding site" evidence="1">
    <location>
        <position position="179"/>
    </location>
    <ligand>
        <name>substrate</name>
    </ligand>
</feature>
<feature type="binding site" evidence="1">
    <location>
        <begin position="230"/>
        <end position="231"/>
    </location>
    <ligand>
        <name>substrate</name>
    </ligand>
</feature>
<feature type="site" description="Transition state stabilizer" evidence="1">
    <location>
        <position position="140"/>
    </location>
</feature>
<evidence type="ECO:0000255" key="1">
    <source>
        <dbReference type="HAMAP-Rule" id="MF_01678"/>
    </source>
</evidence>
<evidence type="ECO:0000305" key="2"/>
<organism>
    <name type="scientific">Thermus thermophilus (strain ATCC 27634 / DSM 579 / HB8)</name>
    <dbReference type="NCBI Taxonomy" id="300852"/>
    <lineage>
        <taxon>Bacteria</taxon>
        <taxon>Thermotogati</taxon>
        <taxon>Deinococcota</taxon>
        <taxon>Deinococci</taxon>
        <taxon>Thermales</taxon>
        <taxon>Thermaceae</taxon>
        <taxon>Thermus</taxon>
    </lineage>
</organism>
<name>MTNA_THET8</name>
<dbReference type="EC" id="5.3.1.23" evidence="1"/>
<dbReference type="EMBL" id="AP008226">
    <property type="protein sequence ID" value="BAD70895.1"/>
    <property type="molecule type" value="Genomic_DNA"/>
</dbReference>
<dbReference type="RefSeq" id="WP_011228421.1">
    <property type="nucleotide sequence ID" value="NC_006461.1"/>
</dbReference>
<dbReference type="RefSeq" id="YP_144338.1">
    <property type="nucleotide sequence ID" value="NC_006461.1"/>
</dbReference>
<dbReference type="SMR" id="Q5SJE2"/>
<dbReference type="EnsemblBacteria" id="BAD70895">
    <property type="protein sequence ID" value="BAD70895"/>
    <property type="gene ID" value="BAD70895"/>
</dbReference>
<dbReference type="GeneID" id="3168231"/>
<dbReference type="KEGG" id="ttj:TTHA1072"/>
<dbReference type="PATRIC" id="fig|300852.9.peg.1052"/>
<dbReference type="eggNOG" id="COG0182">
    <property type="taxonomic scope" value="Bacteria"/>
</dbReference>
<dbReference type="HOGENOM" id="CLU_016218_1_2_0"/>
<dbReference type="PhylomeDB" id="Q5SJE2"/>
<dbReference type="UniPathway" id="UPA00904">
    <property type="reaction ID" value="UER00874"/>
</dbReference>
<dbReference type="Proteomes" id="UP000000532">
    <property type="component" value="Chromosome"/>
</dbReference>
<dbReference type="GO" id="GO:0046523">
    <property type="term" value="F:S-methyl-5-thioribose-1-phosphate isomerase activity"/>
    <property type="evidence" value="ECO:0007669"/>
    <property type="project" value="UniProtKB-UniRule"/>
</dbReference>
<dbReference type="GO" id="GO:0019509">
    <property type="term" value="P:L-methionine salvage from methylthioadenosine"/>
    <property type="evidence" value="ECO:0007669"/>
    <property type="project" value="UniProtKB-UniRule"/>
</dbReference>
<dbReference type="FunFam" id="3.40.50.10470:FF:000006">
    <property type="entry name" value="Methylthioribose-1-phosphate isomerase"/>
    <property type="match status" value="1"/>
</dbReference>
<dbReference type="Gene3D" id="1.20.120.420">
    <property type="entry name" value="translation initiation factor eif-2b, domain 1"/>
    <property type="match status" value="1"/>
</dbReference>
<dbReference type="Gene3D" id="3.40.50.10470">
    <property type="entry name" value="Translation initiation factor eif-2b, domain 2"/>
    <property type="match status" value="1"/>
</dbReference>
<dbReference type="HAMAP" id="MF_01678">
    <property type="entry name" value="Salvage_MtnA"/>
    <property type="match status" value="1"/>
</dbReference>
<dbReference type="InterPro" id="IPR000649">
    <property type="entry name" value="IF-2B-related"/>
</dbReference>
<dbReference type="InterPro" id="IPR005251">
    <property type="entry name" value="IF-M1Pi"/>
</dbReference>
<dbReference type="InterPro" id="IPR042529">
    <property type="entry name" value="IF_2B-like_C"/>
</dbReference>
<dbReference type="InterPro" id="IPR011559">
    <property type="entry name" value="Initiation_fac_2B_a/b/d"/>
</dbReference>
<dbReference type="InterPro" id="IPR027363">
    <property type="entry name" value="M1Pi_N"/>
</dbReference>
<dbReference type="InterPro" id="IPR037171">
    <property type="entry name" value="NagB/RpiA_transferase-like"/>
</dbReference>
<dbReference type="NCBIfam" id="TIGR00524">
    <property type="entry name" value="eIF-2B_rel"/>
    <property type="match status" value="1"/>
</dbReference>
<dbReference type="NCBIfam" id="NF004326">
    <property type="entry name" value="PRK05720.1"/>
    <property type="match status" value="1"/>
</dbReference>
<dbReference type="NCBIfam" id="TIGR00512">
    <property type="entry name" value="salvage_mtnA"/>
    <property type="match status" value="1"/>
</dbReference>
<dbReference type="PANTHER" id="PTHR43475">
    <property type="entry name" value="METHYLTHIORIBOSE-1-PHOSPHATE ISOMERASE"/>
    <property type="match status" value="1"/>
</dbReference>
<dbReference type="PANTHER" id="PTHR43475:SF1">
    <property type="entry name" value="METHYLTHIORIBOSE-1-PHOSPHATE ISOMERASE"/>
    <property type="match status" value="1"/>
</dbReference>
<dbReference type="Pfam" id="PF01008">
    <property type="entry name" value="IF-2B"/>
    <property type="match status" value="1"/>
</dbReference>
<dbReference type="SUPFAM" id="SSF100950">
    <property type="entry name" value="NagB/RpiA/CoA transferase-like"/>
    <property type="match status" value="1"/>
</dbReference>